<protein>
    <recommendedName>
        <fullName evidence="1">Glycerol kinase</fullName>
        <ecNumber evidence="1">2.7.1.30</ecNumber>
    </recommendedName>
    <alternativeName>
        <fullName evidence="1">ATP:glycerol 3-phosphotransferase</fullName>
    </alternativeName>
    <alternativeName>
        <fullName evidence="1">Glycerokinase</fullName>
        <shortName evidence="1">GK</shortName>
    </alternativeName>
</protein>
<keyword id="KW-0067">ATP-binding</keyword>
<keyword id="KW-0319">Glycerol metabolism</keyword>
<keyword id="KW-0418">Kinase</keyword>
<keyword id="KW-0547">Nucleotide-binding</keyword>
<keyword id="KW-0597">Phosphoprotein</keyword>
<keyword id="KW-0808">Transferase</keyword>
<accession>C1CHI6</accession>
<comment type="function">
    <text evidence="1">Key enzyme in the regulation of glycerol uptake and metabolism. Catalyzes the phosphorylation of glycerol to yield sn-glycerol 3-phosphate.</text>
</comment>
<comment type="catalytic activity">
    <reaction evidence="1">
        <text>glycerol + ATP = sn-glycerol 3-phosphate + ADP + H(+)</text>
        <dbReference type="Rhea" id="RHEA:21644"/>
        <dbReference type="ChEBI" id="CHEBI:15378"/>
        <dbReference type="ChEBI" id="CHEBI:17754"/>
        <dbReference type="ChEBI" id="CHEBI:30616"/>
        <dbReference type="ChEBI" id="CHEBI:57597"/>
        <dbReference type="ChEBI" id="CHEBI:456216"/>
        <dbReference type="EC" id="2.7.1.30"/>
    </reaction>
</comment>
<comment type="activity regulation">
    <text evidence="1">Activated by phosphorylation and inhibited by fructose 1,6-bisphosphate (FBP).</text>
</comment>
<comment type="pathway">
    <text evidence="1">Polyol metabolism; glycerol degradation via glycerol kinase pathway; sn-glycerol 3-phosphate from glycerol: step 1/1.</text>
</comment>
<comment type="subunit">
    <text evidence="1">Homotetramer and homodimer (in equilibrium).</text>
</comment>
<comment type="PTM">
    <text evidence="1">The phosphoenolpyruvate-dependent sugar phosphotransferase system (PTS), including enzyme I, and histidine-containing protein (HPr) are required for the phosphorylation, which leads to the activation of the enzyme.</text>
</comment>
<comment type="similarity">
    <text evidence="1">Belongs to the FGGY kinase family.</text>
</comment>
<proteinExistence type="inferred from homology"/>
<organism>
    <name type="scientific">Streptococcus pneumoniae (strain JJA)</name>
    <dbReference type="NCBI Taxonomy" id="488222"/>
    <lineage>
        <taxon>Bacteria</taxon>
        <taxon>Bacillati</taxon>
        <taxon>Bacillota</taxon>
        <taxon>Bacilli</taxon>
        <taxon>Lactobacillales</taxon>
        <taxon>Streptococcaceae</taxon>
        <taxon>Streptococcus</taxon>
    </lineage>
</organism>
<evidence type="ECO:0000255" key="1">
    <source>
        <dbReference type="HAMAP-Rule" id="MF_00186"/>
    </source>
</evidence>
<reference key="1">
    <citation type="journal article" date="2010" name="Genome Biol.">
        <title>Structure and dynamics of the pan-genome of Streptococcus pneumoniae and closely related species.</title>
        <authorList>
            <person name="Donati C."/>
            <person name="Hiller N.L."/>
            <person name="Tettelin H."/>
            <person name="Muzzi A."/>
            <person name="Croucher N.J."/>
            <person name="Angiuoli S.V."/>
            <person name="Oggioni M."/>
            <person name="Dunning Hotopp J.C."/>
            <person name="Hu F.Z."/>
            <person name="Riley D.R."/>
            <person name="Covacci A."/>
            <person name="Mitchell T.J."/>
            <person name="Bentley S.D."/>
            <person name="Kilian M."/>
            <person name="Ehrlich G.D."/>
            <person name="Rappuoli R."/>
            <person name="Moxon E.R."/>
            <person name="Masignani V."/>
        </authorList>
    </citation>
    <scope>NUCLEOTIDE SEQUENCE [LARGE SCALE GENOMIC DNA]</scope>
    <source>
        <strain>JJA</strain>
    </source>
</reference>
<name>GLPK_STRZJ</name>
<feature type="chain" id="PRO_1000124208" description="Glycerol kinase">
    <location>
        <begin position="1"/>
        <end position="502"/>
    </location>
</feature>
<feature type="binding site" evidence="1">
    <location>
        <position position="14"/>
    </location>
    <ligand>
        <name>ADP</name>
        <dbReference type="ChEBI" id="CHEBI:456216"/>
    </ligand>
</feature>
<feature type="binding site" evidence="1">
    <location>
        <position position="14"/>
    </location>
    <ligand>
        <name>ATP</name>
        <dbReference type="ChEBI" id="CHEBI:30616"/>
    </ligand>
</feature>
<feature type="binding site" evidence="1">
    <location>
        <position position="14"/>
    </location>
    <ligand>
        <name>sn-glycerol 3-phosphate</name>
        <dbReference type="ChEBI" id="CHEBI:57597"/>
    </ligand>
</feature>
<feature type="binding site" evidence="1">
    <location>
        <position position="15"/>
    </location>
    <ligand>
        <name>ATP</name>
        <dbReference type="ChEBI" id="CHEBI:30616"/>
    </ligand>
</feature>
<feature type="binding site" evidence="1">
    <location>
        <position position="16"/>
    </location>
    <ligand>
        <name>ATP</name>
        <dbReference type="ChEBI" id="CHEBI:30616"/>
    </ligand>
</feature>
<feature type="binding site" evidence="1">
    <location>
        <position position="18"/>
    </location>
    <ligand>
        <name>ADP</name>
        <dbReference type="ChEBI" id="CHEBI:456216"/>
    </ligand>
</feature>
<feature type="binding site" evidence="1">
    <location>
        <position position="84"/>
    </location>
    <ligand>
        <name>glycerol</name>
        <dbReference type="ChEBI" id="CHEBI:17754"/>
    </ligand>
</feature>
<feature type="binding site" evidence="1">
    <location>
        <position position="84"/>
    </location>
    <ligand>
        <name>sn-glycerol 3-phosphate</name>
        <dbReference type="ChEBI" id="CHEBI:57597"/>
    </ligand>
</feature>
<feature type="binding site" evidence="1">
    <location>
        <position position="85"/>
    </location>
    <ligand>
        <name>glycerol</name>
        <dbReference type="ChEBI" id="CHEBI:17754"/>
    </ligand>
</feature>
<feature type="binding site" evidence="1">
    <location>
        <position position="85"/>
    </location>
    <ligand>
        <name>sn-glycerol 3-phosphate</name>
        <dbReference type="ChEBI" id="CHEBI:57597"/>
    </ligand>
</feature>
<feature type="binding site" evidence="1">
    <location>
        <position position="136"/>
    </location>
    <ligand>
        <name>glycerol</name>
        <dbReference type="ChEBI" id="CHEBI:17754"/>
    </ligand>
</feature>
<feature type="binding site" evidence="1">
    <location>
        <position position="136"/>
    </location>
    <ligand>
        <name>sn-glycerol 3-phosphate</name>
        <dbReference type="ChEBI" id="CHEBI:57597"/>
    </ligand>
</feature>
<feature type="binding site" evidence="1">
    <location>
        <position position="246"/>
    </location>
    <ligand>
        <name>glycerol</name>
        <dbReference type="ChEBI" id="CHEBI:17754"/>
    </ligand>
</feature>
<feature type="binding site" evidence="1">
    <location>
        <position position="246"/>
    </location>
    <ligand>
        <name>sn-glycerol 3-phosphate</name>
        <dbReference type="ChEBI" id="CHEBI:57597"/>
    </ligand>
</feature>
<feature type="binding site" evidence="1">
    <location>
        <position position="247"/>
    </location>
    <ligand>
        <name>glycerol</name>
        <dbReference type="ChEBI" id="CHEBI:17754"/>
    </ligand>
</feature>
<feature type="binding site" evidence="1">
    <location>
        <position position="268"/>
    </location>
    <ligand>
        <name>ADP</name>
        <dbReference type="ChEBI" id="CHEBI:456216"/>
    </ligand>
</feature>
<feature type="binding site" evidence="1">
    <location>
        <position position="268"/>
    </location>
    <ligand>
        <name>ATP</name>
        <dbReference type="ChEBI" id="CHEBI:30616"/>
    </ligand>
</feature>
<feature type="binding site" evidence="1">
    <location>
        <position position="311"/>
    </location>
    <ligand>
        <name>ADP</name>
        <dbReference type="ChEBI" id="CHEBI:456216"/>
    </ligand>
</feature>
<feature type="binding site" evidence="1">
    <location>
        <position position="311"/>
    </location>
    <ligand>
        <name>ATP</name>
        <dbReference type="ChEBI" id="CHEBI:30616"/>
    </ligand>
</feature>
<feature type="binding site" evidence="1">
    <location>
        <position position="315"/>
    </location>
    <ligand>
        <name>ATP</name>
        <dbReference type="ChEBI" id="CHEBI:30616"/>
    </ligand>
</feature>
<feature type="binding site" evidence="1">
    <location>
        <position position="412"/>
    </location>
    <ligand>
        <name>ADP</name>
        <dbReference type="ChEBI" id="CHEBI:456216"/>
    </ligand>
</feature>
<feature type="binding site" evidence="1">
    <location>
        <position position="412"/>
    </location>
    <ligand>
        <name>ATP</name>
        <dbReference type="ChEBI" id="CHEBI:30616"/>
    </ligand>
</feature>
<feature type="binding site" evidence="1">
    <location>
        <position position="416"/>
    </location>
    <ligand>
        <name>ADP</name>
        <dbReference type="ChEBI" id="CHEBI:456216"/>
    </ligand>
</feature>
<feature type="modified residue" description="Phosphohistidine; by HPr" evidence="1">
    <location>
        <position position="232"/>
    </location>
</feature>
<dbReference type="EC" id="2.7.1.30" evidence="1"/>
<dbReference type="EMBL" id="CP000919">
    <property type="protein sequence ID" value="ACO18400.1"/>
    <property type="molecule type" value="Genomic_DNA"/>
</dbReference>
<dbReference type="RefSeq" id="WP_000076776.1">
    <property type="nucleotide sequence ID" value="NC_012466.1"/>
</dbReference>
<dbReference type="SMR" id="C1CHI6"/>
<dbReference type="KEGG" id="sjj:SPJ_2213"/>
<dbReference type="HOGENOM" id="CLU_009281_2_3_9"/>
<dbReference type="UniPathway" id="UPA00618">
    <property type="reaction ID" value="UER00672"/>
</dbReference>
<dbReference type="Proteomes" id="UP000002206">
    <property type="component" value="Chromosome"/>
</dbReference>
<dbReference type="GO" id="GO:0005829">
    <property type="term" value="C:cytosol"/>
    <property type="evidence" value="ECO:0007669"/>
    <property type="project" value="TreeGrafter"/>
</dbReference>
<dbReference type="GO" id="GO:0005524">
    <property type="term" value="F:ATP binding"/>
    <property type="evidence" value="ECO:0007669"/>
    <property type="project" value="UniProtKB-UniRule"/>
</dbReference>
<dbReference type="GO" id="GO:0004370">
    <property type="term" value="F:glycerol kinase activity"/>
    <property type="evidence" value="ECO:0000250"/>
    <property type="project" value="UniProtKB"/>
</dbReference>
<dbReference type="GO" id="GO:0019563">
    <property type="term" value="P:glycerol catabolic process"/>
    <property type="evidence" value="ECO:0007669"/>
    <property type="project" value="UniProtKB-UniRule"/>
</dbReference>
<dbReference type="GO" id="GO:0006071">
    <property type="term" value="P:glycerol metabolic process"/>
    <property type="evidence" value="ECO:0000250"/>
    <property type="project" value="UniProtKB"/>
</dbReference>
<dbReference type="GO" id="GO:0006072">
    <property type="term" value="P:glycerol-3-phosphate metabolic process"/>
    <property type="evidence" value="ECO:0007669"/>
    <property type="project" value="InterPro"/>
</dbReference>
<dbReference type="CDD" id="cd07786">
    <property type="entry name" value="FGGY_EcGK_like"/>
    <property type="match status" value="1"/>
</dbReference>
<dbReference type="FunFam" id="3.30.420.40:FF:000007">
    <property type="entry name" value="Glycerol kinase"/>
    <property type="match status" value="1"/>
</dbReference>
<dbReference type="FunFam" id="3.30.420.40:FF:000008">
    <property type="entry name" value="Glycerol kinase"/>
    <property type="match status" value="1"/>
</dbReference>
<dbReference type="Gene3D" id="3.30.420.40">
    <property type="match status" value="2"/>
</dbReference>
<dbReference type="HAMAP" id="MF_00186">
    <property type="entry name" value="Glycerol_kin"/>
    <property type="match status" value="1"/>
</dbReference>
<dbReference type="InterPro" id="IPR043129">
    <property type="entry name" value="ATPase_NBD"/>
</dbReference>
<dbReference type="InterPro" id="IPR000577">
    <property type="entry name" value="Carb_kinase_FGGY"/>
</dbReference>
<dbReference type="InterPro" id="IPR018483">
    <property type="entry name" value="Carb_kinase_FGGY_CS"/>
</dbReference>
<dbReference type="InterPro" id="IPR018485">
    <property type="entry name" value="FGGY_C"/>
</dbReference>
<dbReference type="InterPro" id="IPR018484">
    <property type="entry name" value="FGGY_N"/>
</dbReference>
<dbReference type="InterPro" id="IPR005999">
    <property type="entry name" value="Glycerol_kin"/>
</dbReference>
<dbReference type="NCBIfam" id="TIGR01311">
    <property type="entry name" value="glycerol_kin"/>
    <property type="match status" value="1"/>
</dbReference>
<dbReference type="NCBIfam" id="NF000756">
    <property type="entry name" value="PRK00047.1"/>
    <property type="match status" value="1"/>
</dbReference>
<dbReference type="PANTHER" id="PTHR10196:SF69">
    <property type="entry name" value="GLYCEROL KINASE"/>
    <property type="match status" value="1"/>
</dbReference>
<dbReference type="PANTHER" id="PTHR10196">
    <property type="entry name" value="SUGAR KINASE"/>
    <property type="match status" value="1"/>
</dbReference>
<dbReference type="Pfam" id="PF02782">
    <property type="entry name" value="FGGY_C"/>
    <property type="match status" value="1"/>
</dbReference>
<dbReference type="Pfam" id="PF00370">
    <property type="entry name" value="FGGY_N"/>
    <property type="match status" value="1"/>
</dbReference>
<dbReference type="PIRSF" id="PIRSF000538">
    <property type="entry name" value="GlpK"/>
    <property type="match status" value="1"/>
</dbReference>
<dbReference type="SUPFAM" id="SSF53067">
    <property type="entry name" value="Actin-like ATPase domain"/>
    <property type="match status" value="2"/>
</dbReference>
<dbReference type="PROSITE" id="PS00933">
    <property type="entry name" value="FGGY_KINASES_1"/>
    <property type="match status" value="1"/>
</dbReference>
<dbReference type="PROSITE" id="PS00445">
    <property type="entry name" value="FGGY_KINASES_2"/>
    <property type="match status" value="1"/>
</dbReference>
<gene>
    <name evidence="1" type="primary">glpK</name>
    <name type="ordered locus">SPJ_2213</name>
</gene>
<sequence length="502" mass="55850">MSQEKYIMAIDQGTTSSRAIIFNKKGEKVSSSQKEFTQIFPQAGWVEHNANEIWNSVQSVIAGAFIESGVKPNQIEAIGITNQRETTVVWDKKTGLPIYNAIVWQSRQTAPLAEQLKSQGYVEKFHEKTGLIIDAYFSATKVRWILDHVEGAQERAEKGELLFGTIDTWLVWKLTDGAAHVTDYSNAARTMLYNIKELKWDDEILEILNIPKAILPEVRSNSEIYGKTAPFHFYGGEVPISGMAGDQQAALFGQLAFEPGMVKNTYGTGSFIIMNTGEEMQLSENNLLTTIGYGINGKVYYALEGSIFIAGSAIQWLRDGLRMVENSPESEKYARDSHNNDEVYVVPAFTGLGAPYWNQNARGSVFGLTRGTSKEDFIKATLQSIAYQVRDIIDTMQVDTQTAIQVLKVDGGAAMNNFLMQFQADILGIDIARAKNLETTALGAAFLAGLSVGYWKDLDELKLLNETGELFEPSMNESRKEQLYKGWKKAVKATQVFAEVDD</sequence>